<feature type="chain" id="PRO_0000160071" description="Superoxide dismutase [Mn/Fe] 1">
    <location>
        <begin position="1"/>
        <end position="199"/>
    </location>
</feature>
<feature type="binding site" evidence="2">
    <location>
        <position position="27"/>
    </location>
    <ligand>
        <name>Fe(3+)</name>
        <dbReference type="ChEBI" id="CHEBI:29034"/>
    </ligand>
</feature>
<feature type="binding site" evidence="2">
    <location>
        <position position="27"/>
    </location>
    <ligand>
        <name>Mn(2+)</name>
        <dbReference type="ChEBI" id="CHEBI:29035"/>
    </ligand>
</feature>
<feature type="binding site" evidence="2">
    <location>
        <position position="81"/>
    </location>
    <ligand>
        <name>Fe(3+)</name>
        <dbReference type="ChEBI" id="CHEBI:29034"/>
    </ligand>
</feature>
<feature type="binding site" evidence="2">
    <location>
        <position position="81"/>
    </location>
    <ligand>
        <name>Mn(2+)</name>
        <dbReference type="ChEBI" id="CHEBI:29035"/>
    </ligand>
</feature>
<feature type="binding site" evidence="2">
    <location>
        <position position="161"/>
    </location>
    <ligand>
        <name>Fe(3+)</name>
        <dbReference type="ChEBI" id="CHEBI:29034"/>
    </ligand>
</feature>
<feature type="binding site" evidence="2">
    <location>
        <position position="161"/>
    </location>
    <ligand>
        <name>Mn(2+)</name>
        <dbReference type="ChEBI" id="CHEBI:29035"/>
    </ligand>
</feature>
<feature type="binding site" evidence="2">
    <location>
        <position position="165"/>
    </location>
    <ligand>
        <name>Fe(3+)</name>
        <dbReference type="ChEBI" id="CHEBI:29034"/>
    </ligand>
</feature>
<feature type="binding site" evidence="2">
    <location>
        <position position="165"/>
    </location>
    <ligand>
        <name>Mn(2+)</name>
        <dbReference type="ChEBI" id="CHEBI:29035"/>
    </ligand>
</feature>
<proteinExistence type="evidence at protein level"/>
<evidence type="ECO:0000250" key="1"/>
<evidence type="ECO:0000250" key="2">
    <source>
        <dbReference type="UniProtKB" id="P80293"/>
    </source>
</evidence>
<evidence type="ECO:0000305" key="3"/>
<reference key="1">
    <citation type="journal article" date="2001" name="Lancet">
        <title>Whole genome sequencing of meticillin-resistant Staphylococcus aureus.</title>
        <authorList>
            <person name="Kuroda M."/>
            <person name="Ohta T."/>
            <person name="Uchiyama I."/>
            <person name="Baba T."/>
            <person name="Yuzawa H."/>
            <person name="Kobayashi I."/>
            <person name="Cui L."/>
            <person name="Oguchi A."/>
            <person name="Aoki K."/>
            <person name="Nagai Y."/>
            <person name="Lian J.-Q."/>
            <person name="Ito T."/>
            <person name="Kanamori M."/>
            <person name="Matsumaru H."/>
            <person name="Maruyama A."/>
            <person name="Murakami H."/>
            <person name="Hosoyama A."/>
            <person name="Mizutani-Ui Y."/>
            <person name="Takahashi N.K."/>
            <person name="Sawano T."/>
            <person name="Inoue R."/>
            <person name="Kaito C."/>
            <person name="Sekimizu K."/>
            <person name="Hirakawa H."/>
            <person name="Kuhara S."/>
            <person name="Goto S."/>
            <person name="Yabuzaki J."/>
            <person name="Kanehisa M."/>
            <person name="Yamashita A."/>
            <person name="Oshima K."/>
            <person name="Furuya K."/>
            <person name="Yoshino C."/>
            <person name="Shiba T."/>
            <person name="Hattori M."/>
            <person name="Ogasawara N."/>
            <person name="Hayashi H."/>
            <person name="Hiramatsu K."/>
        </authorList>
    </citation>
    <scope>NUCLEOTIDE SEQUENCE [LARGE SCALE GENOMIC DNA]</scope>
    <source>
        <strain>N315</strain>
    </source>
</reference>
<reference key="2">
    <citation type="journal article" date="2005" name="J. Microbiol. Methods">
        <title>Correlation of proteomic and transcriptomic profiles of Staphylococcus aureus during the post-exponential phase of growth.</title>
        <authorList>
            <person name="Scherl A."/>
            <person name="Francois P."/>
            <person name="Bento M."/>
            <person name="Deshusses J.M."/>
            <person name="Charbonnier Y."/>
            <person name="Converset V."/>
            <person name="Huyghe A."/>
            <person name="Walter N."/>
            <person name="Hoogland C."/>
            <person name="Appel R.D."/>
            <person name="Sanchez J.-C."/>
            <person name="Zimmermann-Ivol C.G."/>
            <person name="Corthals G.L."/>
            <person name="Hochstrasser D.F."/>
            <person name="Schrenzel J."/>
        </authorList>
    </citation>
    <scope>IDENTIFICATION BY MASS SPECTROMETRY</scope>
    <source>
        <strain>N315</strain>
    </source>
</reference>
<reference key="3">
    <citation type="submission" date="2007-10" db="UniProtKB">
        <title>Shotgun proteomic analysis of total and membrane protein extracts of S. aureus strain N315.</title>
        <authorList>
            <person name="Vaezzadeh A.R."/>
            <person name="Deshusses J."/>
            <person name="Lescuyer P."/>
            <person name="Hochstrasser D.F."/>
        </authorList>
    </citation>
    <scope>IDENTIFICATION BY MASS SPECTROMETRY [LARGE SCALE ANALYSIS]</scope>
    <source>
        <strain>N315</strain>
    </source>
</reference>
<name>SODM1_STAAN</name>
<dbReference type="EC" id="1.15.1.1" evidence="2"/>
<dbReference type="EMBL" id="BA000018">
    <property type="protein sequence ID" value="BAB42645.1"/>
    <property type="molecule type" value="Genomic_DNA"/>
</dbReference>
<dbReference type="PIR" id="H89935">
    <property type="entry name" value="H89935"/>
</dbReference>
<dbReference type="RefSeq" id="WP_000863556.1">
    <property type="nucleotide sequence ID" value="NC_002745.2"/>
</dbReference>
<dbReference type="SMR" id="P99098"/>
<dbReference type="EnsemblBacteria" id="BAB42645">
    <property type="protein sequence ID" value="BAB42645"/>
    <property type="gene ID" value="BAB42645"/>
</dbReference>
<dbReference type="KEGG" id="sau:SA1382"/>
<dbReference type="HOGENOM" id="CLU_031625_0_1_9"/>
<dbReference type="GO" id="GO:0005737">
    <property type="term" value="C:cytoplasm"/>
    <property type="evidence" value="ECO:0007669"/>
    <property type="project" value="TreeGrafter"/>
</dbReference>
<dbReference type="GO" id="GO:0046872">
    <property type="term" value="F:metal ion binding"/>
    <property type="evidence" value="ECO:0007669"/>
    <property type="project" value="UniProtKB-KW"/>
</dbReference>
<dbReference type="GO" id="GO:0004784">
    <property type="term" value="F:superoxide dismutase activity"/>
    <property type="evidence" value="ECO:0007669"/>
    <property type="project" value="UniProtKB-EC"/>
</dbReference>
<dbReference type="FunFam" id="1.10.287.990:FF:000001">
    <property type="entry name" value="Superoxide dismutase"/>
    <property type="match status" value="1"/>
</dbReference>
<dbReference type="FunFam" id="3.55.40.20:FF:000001">
    <property type="entry name" value="Superoxide dismutase"/>
    <property type="match status" value="1"/>
</dbReference>
<dbReference type="Gene3D" id="1.10.287.990">
    <property type="entry name" value="Fe,Mn superoxide dismutase (SOD) domain"/>
    <property type="match status" value="1"/>
</dbReference>
<dbReference type="Gene3D" id="3.55.40.20">
    <property type="entry name" value="Iron/manganese superoxide dismutase, C-terminal domain"/>
    <property type="match status" value="1"/>
</dbReference>
<dbReference type="InterPro" id="IPR001189">
    <property type="entry name" value="Mn/Fe_SOD"/>
</dbReference>
<dbReference type="InterPro" id="IPR019833">
    <property type="entry name" value="Mn/Fe_SOD_BS"/>
</dbReference>
<dbReference type="InterPro" id="IPR019832">
    <property type="entry name" value="Mn/Fe_SOD_C"/>
</dbReference>
<dbReference type="InterPro" id="IPR019831">
    <property type="entry name" value="Mn/Fe_SOD_N"/>
</dbReference>
<dbReference type="InterPro" id="IPR036324">
    <property type="entry name" value="Mn/Fe_SOD_N_sf"/>
</dbReference>
<dbReference type="InterPro" id="IPR036314">
    <property type="entry name" value="SOD_C_sf"/>
</dbReference>
<dbReference type="PANTHER" id="PTHR43595">
    <property type="entry name" value="37S RIBOSOMAL PROTEIN S26, MITOCHONDRIAL"/>
    <property type="match status" value="1"/>
</dbReference>
<dbReference type="PANTHER" id="PTHR43595:SF2">
    <property type="entry name" value="SMALL RIBOSOMAL SUBUNIT PROTEIN MS42"/>
    <property type="match status" value="1"/>
</dbReference>
<dbReference type="Pfam" id="PF02777">
    <property type="entry name" value="Sod_Fe_C"/>
    <property type="match status" value="1"/>
</dbReference>
<dbReference type="Pfam" id="PF00081">
    <property type="entry name" value="Sod_Fe_N"/>
    <property type="match status" value="1"/>
</dbReference>
<dbReference type="PIRSF" id="PIRSF000349">
    <property type="entry name" value="SODismutase"/>
    <property type="match status" value="1"/>
</dbReference>
<dbReference type="PRINTS" id="PR01703">
    <property type="entry name" value="MNSODISMTASE"/>
</dbReference>
<dbReference type="SUPFAM" id="SSF54719">
    <property type="entry name" value="Fe,Mn superoxide dismutase (SOD), C-terminal domain"/>
    <property type="match status" value="1"/>
</dbReference>
<dbReference type="SUPFAM" id="SSF46609">
    <property type="entry name" value="Fe,Mn superoxide dismutase (SOD), N-terminal domain"/>
    <property type="match status" value="1"/>
</dbReference>
<dbReference type="PROSITE" id="PS00088">
    <property type="entry name" value="SOD_MN"/>
    <property type="match status" value="1"/>
</dbReference>
<comment type="function">
    <text evidence="2">Destroys superoxide anion radicals which are normally produced within the cells and which are toxic to biological systems. Catalyzes the dismutation of superoxide anion radicals into O2 and H2O2 by successive reduction and oxidation of the transition metal ion at the active site.</text>
</comment>
<comment type="catalytic activity">
    <reaction evidence="2">
        <text>2 superoxide + 2 H(+) = H2O2 + O2</text>
        <dbReference type="Rhea" id="RHEA:20696"/>
        <dbReference type="ChEBI" id="CHEBI:15378"/>
        <dbReference type="ChEBI" id="CHEBI:15379"/>
        <dbReference type="ChEBI" id="CHEBI:16240"/>
        <dbReference type="ChEBI" id="CHEBI:18421"/>
        <dbReference type="EC" id="1.15.1.1"/>
    </reaction>
    <physiologicalReaction direction="left-to-right" evidence="2">
        <dbReference type="Rhea" id="RHEA:20697"/>
    </physiologicalReaction>
</comment>
<comment type="cofactor">
    <cofactor evidence="2">
        <name>Mn(2+)</name>
        <dbReference type="ChEBI" id="CHEBI:29035"/>
    </cofactor>
    <cofactor evidence="2">
        <name>Fe(3+)</name>
        <dbReference type="ChEBI" id="CHEBI:29034"/>
    </cofactor>
    <text evidence="2">Binds 1 Mn(2+) or Fe(3+) ion per subunit.</text>
</comment>
<comment type="subunit">
    <text evidence="1">Homodimer. Can also form a heterodimer with SodM (By similarity).</text>
</comment>
<comment type="similarity">
    <text evidence="3">Belongs to the iron/manganese superoxide dismutase family.</text>
</comment>
<protein>
    <recommendedName>
        <fullName>Superoxide dismutase [Mn/Fe] 1</fullName>
        <ecNumber evidence="2">1.15.1.1</ecNumber>
    </recommendedName>
</protein>
<sequence>MAFELPKLPYAFDALEPHFDKETMEIHHDRHHNTYVTKLNAAVEGTDLESKSIEEIVANLDSVPANIQTAVRNNGGGHLNHSLFWELLSPNSEEKGTVVEKIKEQWGSLEEFKKEFADKAAARFGSGWAWLVVNNGQLEIVTTPNQDNPLTEGKTPILGLDVWEHAYYLKYQNKRPDYIGAFWNVVNWEKVDELYNATK</sequence>
<gene>
    <name type="primary">sodA</name>
    <name type="ordered locus">SA1382</name>
</gene>
<accession>P99098</accession>
<accession>Q9Z5W5</accession>
<organism>
    <name type="scientific">Staphylococcus aureus (strain N315)</name>
    <dbReference type="NCBI Taxonomy" id="158879"/>
    <lineage>
        <taxon>Bacteria</taxon>
        <taxon>Bacillati</taxon>
        <taxon>Bacillota</taxon>
        <taxon>Bacilli</taxon>
        <taxon>Bacillales</taxon>
        <taxon>Staphylococcaceae</taxon>
        <taxon>Staphylococcus</taxon>
    </lineage>
</organism>
<keyword id="KW-0408">Iron</keyword>
<keyword id="KW-0464">Manganese</keyword>
<keyword id="KW-0479">Metal-binding</keyword>
<keyword id="KW-0560">Oxidoreductase</keyword>
<keyword id="KW-0346">Stress response</keyword>